<gene>
    <name evidence="1" type="primary">yfbV</name>
    <name type="ordered locus">ECIAI39_2442</name>
</gene>
<comment type="subcellular location">
    <subcellularLocation>
        <location evidence="1">Cell inner membrane</location>
        <topology evidence="1">Multi-pass membrane protein</topology>
    </subcellularLocation>
</comment>
<comment type="similarity">
    <text evidence="1">Belongs to the UPF0208 family.</text>
</comment>
<organism>
    <name type="scientific">Escherichia coli O7:K1 (strain IAI39 / ExPEC)</name>
    <dbReference type="NCBI Taxonomy" id="585057"/>
    <lineage>
        <taxon>Bacteria</taxon>
        <taxon>Pseudomonadati</taxon>
        <taxon>Pseudomonadota</taxon>
        <taxon>Gammaproteobacteria</taxon>
        <taxon>Enterobacterales</taxon>
        <taxon>Enterobacteriaceae</taxon>
        <taxon>Escherichia</taxon>
    </lineage>
</organism>
<dbReference type="EMBL" id="CU928164">
    <property type="protein sequence ID" value="CAR18568.1"/>
    <property type="molecule type" value="Genomic_DNA"/>
</dbReference>
<dbReference type="RefSeq" id="WP_000106627.1">
    <property type="nucleotide sequence ID" value="NC_011750.1"/>
</dbReference>
<dbReference type="RefSeq" id="YP_002408398.1">
    <property type="nucleotide sequence ID" value="NC_011750.1"/>
</dbReference>
<dbReference type="STRING" id="585057.ECIAI39_2442"/>
<dbReference type="GeneID" id="93774879"/>
<dbReference type="KEGG" id="ect:ECIAI39_2442"/>
<dbReference type="PATRIC" id="fig|585057.6.peg.2544"/>
<dbReference type="HOGENOM" id="CLU_128746_0_0_6"/>
<dbReference type="Proteomes" id="UP000000749">
    <property type="component" value="Chromosome"/>
</dbReference>
<dbReference type="GO" id="GO:0005886">
    <property type="term" value="C:plasma membrane"/>
    <property type="evidence" value="ECO:0007669"/>
    <property type="project" value="UniProtKB-SubCell"/>
</dbReference>
<dbReference type="HAMAP" id="MF_01101">
    <property type="entry name" value="UPF0208"/>
    <property type="match status" value="1"/>
</dbReference>
<dbReference type="InterPro" id="IPR007334">
    <property type="entry name" value="UPF0208"/>
</dbReference>
<dbReference type="NCBIfam" id="NF002493">
    <property type="entry name" value="PRK01816.1"/>
    <property type="match status" value="1"/>
</dbReference>
<dbReference type="Pfam" id="PF04217">
    <property type="entry name" value="DUF412"/>
    <property type="match status" value="1"/>
</dbReference>
<proteinExistence type="inferred from homology"/>
<keyword id="KW-0997">Cell inner membrane</keyword>
<keyword id="KW-1003">Cell membrane</keyword>
<keyword id="KW-0472">Membrane</keyword>
<keyword id="KW-0812">Transmembrane</keyword>
<keyword id="KW-1133">Transmembrane helix</keyword>
<sequence length="151" mass="17213">MSTPDNRSVNFFSLFRRGQHYSKTWPLEKRLAPVFVENRVIKMTRYAIRFMPPIAVFTLCWQIALGGQLGPAVATALFALSLPMQGLWWLGKRSVTPLPPAILNWFYEVRGKLQESGQVLAPVEGKPDYQALADTLKRAFKQLDKTFLDDL</sequence>
<reference key="1">
    <citation type="journal article" date="2009" name="PLoS Genet.">
        <title>Organised genome dynamics in the Escherichia coli species results in highly diverse adaptive paths.</title>
        <authorList>
            <person name="Touchon M."/>
            <person name="Hoede C."/>
            <person name="Tenaillon O."/>
            <person name="Barbe V."/>
            <person name="Baeriswyl S."/>
            <person name="Bidet P."/>
            <person name="Bingen E."/>
            <person name="Bonacorsi S."/>
            <person name="Bouchier C."/>
            <person name="Bouvet O."/>
            <person name="Calteau A."/>
            <person name="Chiapello H."/>
            <person name="Clermont O."/>
            <person name="Cruveiller S."/>
            <person name="Danchin A."/>
            <person name="Diard M."/>
            <person name="Dossat C."/>
            <person name="Karoui M.E."/>
            <person name="Frapy E."/>
            <person name="Garry L."/>
            <person name="Ghigo J.M."/>
            <person name="Gilles A.M."/>
            <person name="Johnson J."/>
            <person name="Le Bouguenec C."/>
            <person name="Lescat M."/>
            <person name="Mangenot S."/>
            <person name="Martinez-Jehanne V."/>
            <person name="Matic I."/>
            <person name="Nassif X."/>
            <person name="Oztas S."/>
            <person name="Petit M.A."/>
            <person name="Pichon C."/>
            <person name="Rouy Z."/>
            <person name="Ruf C.S."/>
            <person name="Schneider D."/>
            <person name="Tourret J."/>
            <person name="Vacherie B."/>
            <person name="Vallenet D."/>
            <person name="Medigue C."/>
            <person name="Rocha E.P.C."/>
            <person name="Denamur E."/>
        </authorList>
    </citation>
    <scope>NUCLEOTIDE SEQUENCE [LARGE SCALE GENOMIC DNA]</scope>
    <source>
        <strain>IAI39 / ExPEC</strain>
    </source>
</reference>
<accession>B7NNX4</accession>
<name>YFBV_ECO7I</name>
<feature type="chain" id="PRO_1000136986" description="UPF0208 membrane protein YfbV">
    <location>
        <begin position="1"/>
        <end position="151"/>
    </location>
</feature>
<feature type="transmembrane region" description="Helical" evidence="1">
    <location>
        <begin position="46"/>
        <end position="65"/>
    </location>
</feature>
<feature type="transmembrane region" description="Helical" evidence="1">
    <location>
        <begin position="69"/>
        <end position="91"/>
    </location>
</feature>
<protein>
    <recommendedName>
        <fullName evidence="1">UPF0208 membrane protein YfbV</fullName>
    </recommendedName>
</protein>
<evidence type="ECO:0000255" key="1">
    <source>
        <dbReference type="HAMAP-Rule" id="MF_01101"/>
    </source>
</evidence>